<evidence type="ECO:0000255" key="1">
    <source>
        <dbReference type="HAMAP-Rule" id="MF_01210"/>
    </source>
</evidence>
<sequence length="1067" mass="118901">MPLNKDIKKVLVIGSGPIIIGQAAEFDYSGTQACQALKEEGIEVVLVNSNPATIMTDKEIADKVYLEPLTVEFVEKVIEKERPDSLLAGMGGQTGLNLAVELYEKGILDKYNVKVIGTSIESIKEGEDRELFRDMMNRINQPVIQSEIITDLDSGIAFARKIGYPVIVRPAYTLGGTGGGIANNEEELIETLTSGLQLSTIGQVLLEKSVKGWKEIEYEVMRDSFGNCITVCNMENIDPVGIHTGDSIVVAPSQTLSDKEYQMLRSASIDIINAVGIKGGCNVQFALNPHSFEYAVIEINPRVSRSSALASKATGYPIAKVAAKIALGYGLDEIKNAVTGMTYACFEPSLDYVVVKIPKWPFDKFQGADRVLGTKMMATGEIMAIGSNFEAAFLKGIRSLEIGKYSLEHKKFKDLSMYELRERVVSPDDERIFALAEMLRRGYRIDMVSKITGIDIFFLEKFRWLVEEEQKLKQSTIDDLNREWLLKLKRRGFSDKAIADMLKVSPDEIYRLRDIWHIKPSYKMVDTCGGEFEALSPYYYSTYEQYDEVVVSDNKKVVVIGSGPIRIGQGIEFDYASVHCVMALRKQGIETIVINNNPETVSTDFSISDKLYFEPLTEEDVLNIIDKENPDGVILQFGGQTAIKLAKFLKEKNIPTLGTTSDQIDLAEDREQFDDLLERLNIARPKGKGVWSLEEGLEEARRLGFPILVRPSFVLGGQGMEITHDEEELTYYLTNAFEKDSKNPILIDKYLMGREIEVDAISDGEDVLVPGIMEHLERAGVHSGDSITMYPAQNISDKIKEDVLDYTKKLALSIGIKGMINIQFIEFEGKLYVIEVNPRASRTVPYISKVSGVPIVDIATRIMLGEKLKDLGYGTGVYKEPELVSVKVPVFSTQKLPNVEVSLGPEMRSTGEVLGVGRNVFEALYKGFVGASMYTGDKGKTILATIKKHDKKEFMELSKDLDKLGYNFIATTGTANELREAGIDAKEVRRIGEESPNIMDLIKNKEIDLVVNTPTKANDSKRDGFHIRRAAIERNIGVMTSLDTLKALVELQKEGAHNRELEVFNLI</sequence>
<dbReference type="EC" id="6.3.4.16" evidence="1"/>
<dbReference type="EC" id="6.3.5.5" evidence="1"/>
<dbReference type="EMBL" id="CP000312">
    <property type="protein sequence ID" value="ABG87671.1"/>
    <property type="molecule type" value="Genomic_DNA"/>
</dbReference>
<dbReference type="RefSeq" id="WP_011593252.1">
    <property type="nucleotide sequence ID" value="NC_008262.1"/>
</dbReference>
<dbReference type="SMR" id="Q0SPY4"/>
<dbReference type="KEGG" id="cpr:CPR_2576"/>
<dbReference type="UniPathway" id="UPA00068">
    <property type="reaction ID" value="UER00171"/>
</dbReference>
<dbReference type="UniPathway" id="UPA00070">
    <property type="reaction ID" value="UER00115"/>
</dbReference>
<dbReference type="Proteomes" id="UP000001824">
    <property type="component" value="Chromosome"/>
</dbReference>
<dbReference type="GO" id="GO:0005737">
    <property type="term" value="C:cytoplasm"/>
    <property type="evidence" value="ECO:0007669"/>
    <property type="project" value="TreeGrafter"/>
</dbReference>
<dbReference type="GO" id="GO:0005524">
    <property type="term" value="F:ATP binding"/>
    <property type="evidence" value="ECO:0007669"/>
    <property type="project" value="UniProtKB-UniRule"/>
</dbReference>
<dbReference type="GO" id="GO:0004087">
    <property type="term" value="F:carbamoyl-phosphate synthase (ammonia) activity"/>
    <property type="evidence" value="ECO:0007669"/>
    <property type="project" value="RHEA"/>
</dbReference>
<dbReference type="GO" id="GO:0004088">
    <property type="term" value="F:carbamoyl-phosphate synthase (glutamine-hydrolyzing) activity"/>
    <property type="evidence" value="ECO:0007669"/>
    <property type="project" value="UniProtKB-UniRule"/>
</dbReference>
<dbReference type="GO" id="GO:0046872">
    <property type="term" value="F:metal ion binding"/>
    <property type="evidence" value="ECO:0007669"/>
    <property type="project" value="UniProtKB-KW"/>
</dbReference>
<dbReference type="GO" id="GO:0044205">
    <property type="term" value="P:'de novo' UMP biosynthetic process"/>
    <property type="evidence" value="ECO:0007669"/>
    <property type="project" value="UniProtKB-UniRule"/>
</dbReference>
<dbReference type="GO" id="GO:0006541">
    <property type="term" value="P:glutamine metabolic process"/>
    <property type="evidence" value="ECO:0007669"/>
    <property type="project" value="TreeGrafter"/>
</dbReference>
<dbReference type="GO" id="GO:0006526">
    <property type="term" value="P:L-arginine biosynthetic process"/>
    <property type="evidence" value="ECO:0007669"/>
    <property type="project" value="UniProtKB-UniRule"/>
</dbReference>
<dbReference type="CDD" id="cd01424">
    <property type="entry name" value="MGS_CPS_II"/>
    <property type="match status" value="1"/>
</dbReference>
<dbReference type="FunFam" id="1.10.1030.10:FF:000002">
    <property type="entry name" value="Carbamoyl-phosphate synthase large chain"/>
    <property type="match status" value="1"/>
</dbReference>
<dbReference type="FunFam" id="3.30.470.20:FF:000001">
    <property type="entry name" value="Carbamoyl-phosphate synthase large chain"/>
    <property type="match status" value="1"/>
</dbReference>
<dbReference type="FunFam" id="3.30.470.20:FF:000026">
    <property type="entry name" value="Carbamoyl-phosphate synthase large chain"/>
    <property type="match status" value="1"/>
</dbReference>
<dbReference type="FunFam" id="3.40.50.20:FF:000001">
    <property type="entry name" value="Carbamoyl-phosphate synthase large chain"/>
    <property type="match status" value="2"/>
</dbReference>
<dbReference type="Gene3D" id="3.40.50.20">
    <property type="match status" value="2"/>
</dbReference>
<dbReference type="Gene3D" id="3.30.1490.20">
    <property type="entry name" value="ATP-grasp fold, A domain"/>
    <property type="match status" value="1"/>
</dbReference>
<dbReference type="Gene3D" id="3.30.470.20">
    <property type="entry name" value="ATP-grasp fold, B domain"/>
    <property type="match status" value="2"/>
</dbReference>
<dbReference type="Gene3D" id="1.10.1030.10">
    <property type="entry name" value="Carbamoyl-phosphate synthetase, large subunit oligomerisation domain"/>
    <property type="match status" value="1"/>
</dbReference>
<dbReference type="Gene3D" id="3.40.50.1380">
    <property type="entry name" value="Methylglyoxal synthase-like domain"/>
    <property type="match status" value="1"/>
</dbReference>
<dbReference type="HAMAP" id="MF_01210_A">
    <property type="entry name" value="CPSase_L_chain_A"/>
    <property type="match status" value="1"/>
</dbReference>
<dbReference type="HAMAP" id="MF_01210_B">
    <property type="entry name" value="CPSase_L_chain_B"/>
    <property type="match status" value="1"/>
</dbReference>
<dbReference type="InterPro" id="IPR011761">
    <property type="entry name" value="ATP-grasp"/>
</dbReference>
<dbReference type="InterPro" id="IPR013815">
    <property type="entry name" value="ATP_grasp_subdomain_1"/>
</dbReference>
<dbReference type="InterPro" id="IPR006275">
    <property type="entry name" value="CarbamoylP_synth_lsu"/>
</dbReference>
<dbReference type="InterPro" id="IPR005480">
    <property type="entry name" value="CarbamoylP_synth_lsu_oligo"/>
</dbReference>
<dbReference type="InterPro" id="IPR036897">
    <property type="entry name" value="CarbamoylP_synth_lsu_oligo_sf"/>
</dbReference>
<dbReference type="InterPro" id="IPR005479">
    <property type="entry name" value="CbamoylP_synth_lsu-like_ATP-bd"/>
</dbReference>
<dbReference type="InterPro" id="IPR005483">
    <property type="entry name" value="CbamoylP_synth_lsu_CPSase_dom"/>
</dbReference>
<dbReference type="InterPro" id="IPR011607">
    <property type="entry name" value="MGS-like_dom"/>
</dbReference>
<dbReference type="InterPro" id="IPR036914">
    <property type="entry name" value="MGS-like_dom_sf"/>
</dbReference>
<dbReference type="InterPro" id="IPR033937">
    <property type="entry name" value="MGS_CPS_CarB"/>
</dbReference>
<dbReference type="InterPro" id="IPR016185">
    <property type="entry name" value="PreATP-grasp_dom_sf"/>
</dbReference>
<dbReference type="NCBIfam" id="TIGR01369">
    <property type="entry name" value="CPSaseII_lrg"/>
    <property type="match status" value="1"/>
</dbReference>
<dbReference type="NCBIfam" id="NF003671">
    <property type="entry name" value="PRK05294.1"/>
    <property type="match status" value="1"/>
</dbReference>
<dbReference type="NCBIfam" id="NF009455">
    <property type="entry name" value="PRK12815.1"/>
    <property type="match status" value="1"/>
</dbReference>
<dbReference type="PANTHER" id="PTHR11405:SF53">
    <property type="entry name" value="CARBAMOYL-PHOSPHATE SYNTHASE [AMMONIA], MITOCHONDRIAL"/>
    <property type="match status" value="1"/>
</dbReference>
<dbReference type="PANTHER" id="PTHR11405">
    <property type="entry name" value="CARBAMOYLTRANSFERASE FAMILY MEMBER"/>
    <property type="match status" value="1"/>
</dbReference>
<dbReference type="Pfam" id="PF02786">
    <property type="entry name" value="CPSase_L_D2"/>
    <property type="match status" value="2"/>
</dbReference>
<dbReference type="Pfam" id="PF02787">
    <property type="entry name" value="CPSase_L_D3"/>
    <property type="match status" value="1"/>
</dbReference>
<dbReference type="Pfam" id="PF02142">
    <property type="entry name" value="MGS"/>
    <property type="match status" value="1"/>
</dbReference>
<dbReference type="PRINTS" id="PR00098">
    <property type="entry name" value="CPSASE"/>
</dbReference>
<dbReference type="SMART" id="SM01096">
    <property type="entry name" value="CPSase_L_D3"/>
    <property type="match status" value="1"/>
</dbReference>
<dbReference type="SMART" id="SM00851">
    <property type="entry name" value="MGS"/>
    <property type="match status" value="1"/>
</dbReference>
<dbReference type="SUPFAM" id="SSF48108">
    <property type="entry name" value="Carbamoyl phosphate synthetase, large subunit connection domain"/>
    <property type="match status" value="1"/>
</dbReference>
<dbReference type="SUPFAM" id="SSF56059">
    <property type="entry name" value="Glutathione synthetase ATP-binding domain-like"/>
    <property type="match status" value="2"/>
</dbReference>
<dbReference type="SUPFAM" id="SSF52335">
    <property type="entry name" value="Methylglyoxal synthase-like"/>
    <property type="match status" value="1"/>
</dbReference>
<dbReference type="SUPFAM" id="SSF52440">
    <property type="entry name" value="PreATP-grasp domain"/>
    <property type="match status" value="2"/>
</dbReference>
<dbReference type="PROSITE" id="PS50975">
    <property type="entry name" value="ATP_GRASP"/>
    <property type="match status" value="2"/>
</dbReference>
<dbReference type="PROSITE" id="PS00866">
    <property type="entry name" value="CPSASE_1"/>
    <property type="match status" value="2"/>
</dbReference>
<dbReference type="PROSITE" id="PS00867">
    <property type="entry name" value="CPSASE_2"/>
    <property type="match status" value="2"/>
</dbReference>
<dbReference type="PROSITE" id="PS51855">
    <property type="entry name" value="MGS"/>
    <property type="match status" value="1"/>
</dbReference>
<reference key="1">
    <citation type="journal article" date="2006" name="Genome Res.">
        <title>Skewed genomic variability in strains of the toxigenic bacterial pathogen, Clostridium perfringens.</title>
        <authorList>
            <person name="Myers G.S.A."/>
            <person name="Rasko D.A."/>
            <person name="Cheung J.K."/>
            <person name="Ravel J."/>
            <person name="Seshadri R."/>
            <person name="DeBoy R.T."/>
            <person name="Ren Q."/>
            <person name="Varga J."/>
            <person name="Awad M.M."/>
            <person name="Brinkac L.M."/>
            <person name="Daugherty S.C."/>
            <person name="Haft D.H."/>
            <person name="Dodson R.J."/>
            <person name="Madupu R."/>
            <person name="Nelson W.C."/>
            <person name="Rosovitz M.J."/>
            <person name="Sullivan S.A."/>
            <person name="Khouri H."/>
            <person name="Dimitrov G.I."/>
            <person name="Watkins K.L."/>
            <person name="Mulligan S."/>
            <person name="Benton J."/>
            <person name="Radune D."/>
            <person name="Fisher D.J."/>
            <person name="Atkins H.S."/>
            <person name="Hiscox T."/>
            <person name="Jost B.H."/>
            <person name="Billington S.J."/>
            <person name="Songer J.G."/>
            <person name="McClane B.A."/>
            <person name="Titball R.W."/>
            <person name="Rood J.I."/>
            <person name="Melville S.B."/>
            <person name="Paulsen I.T."/>
        </authorList>
    </citation>
    <scope>NUCLEOTIDE SEQUENCE [LARGE SCALE GENOMIC DNA]</scope>
    <source>
        <strain>SM101 / Type A</strain>
    </source>
</reference>
<comment type="function">
    <text evidence="1">Large subunit of the glutamine-dependent carbamoyl phosphate synthetase (CPSase). CPSase catalyzes the formation of carbamoyl phosphate from the ammonia moiety of glutamine, carbonate, and phosphate donated by ATP, constituting the first step of 2 biosynthetic pathways, one leading to arginine and/or urea and the other to pyrimidine nucleotides. The large subunit (synthetase) binds the substrates ammonia (free or transferred from glutamine from the small subunit), hydrogencarbonate and ATP and carries out an ATP-coupled ligase reaction, activating hydrogencarbonate by forming carboxy phosphate which reacts with ammonia to form carbamoyl phosphate.</text>
</comment>
<comment type="catalytic activity">
    <reaction evidence="1">
        <text>hydrogencarbonate + L-glutamine + 2 ATP + H2O = carbamoyl phosphate + L-glutamate + 2 ADP + phosphate + 2 H(+)</text>
        <dbReference type="Rhea" id="RHEA:18633"/>
        <dbReference type="ChEBI" id="CHEBI:15377"/>
        <dbReference type="ChEBI" id="CHEBI:15378"/>
        <dbReference type="ChEBI" id="CHEBI:17544"/>
        <dbReference type="ChEBI" id="CHEBI:29985"/>
        <dbReference type="ChEBI" id="CHEBI:30616"/>
        <dbReference type="ChEBI" id="CHEBI:43474"/>
        <dbReference type="ChEBI" id="CHEBI:58228"/>
        <dbReference type="ChEBI" id="CHEBI:58359"/>
        <dbReference type="ChEBI" id="CHEBI:456216"/>
        <dbReference type="EC" id="6.3.5.5"/>
    </reaction>
</comment>
<comment type="catalytic activity">
    <molecule>Carbamoyl phosphate synthase large chain</molecule>
    <reaction evidence="1">
        <text>hydrogencarbonate + NH4(+) + 2 ATP = carbamoyl phosphate + 2 ADP + phosphate + 2 H(+)</text>
        <dbReference type="Rhea" id="RHEA:18029"/>
        <dbReference type="ChEBI" id="CHEBI:15378"/>
        <dbReference type="ChEBI" id="CHEBI:17544"/>
        <dbReference type="ChEBI" id="CHEBI:28938"/>
        <dbReference type="ChEBI" id="CHEBI:30616"/>
        <dbReference type="ChEBI" id="CHEBI:43474"/>
        <dbReference type="ChEBI" id="CHEBI:58228"/>
        <dbReference type="ChEBI" id="CHEBI:456216"/>
        <dbReference type="EC" id="6.3.4.16"/>
    </reaction>
</comment>
<comment type="cofactor">
    <cofactor evidence="1">
        <name>Mg(2+)</name>
        <dbReference type="ChEBI" id="CHEBI:18420"/>
    </cofactor>
    <cofactor evidence="1">
        <name>Mn(2+)</name>
        <dbReference type="ChEBI" id="CHEBI:29035"/>
    </cofactor>
    <text evidence="1">Binds 4 Mg(2+) or Mn(2+) ions per subunit.</text>
</comment>
<comment type="pathway">
    <text evidence="1">Amino-acid biosynthesis; L-arginine biosynthesis; carbamoyl phosphate from bicarbonate: step 1/1.</text>
</comment>
<comment type="pathway">
    <text evidence="1">Pyrimidine metabolism; UMP biosynthesis via de novo pathway; (S)-dihydroorotate from bicarbonate: step 1/3.</text>
</comment>
<comment type="subunit">
    <text evidence="1">Composed of two chains; the small (or glutamine) chain promotes the hydrolysis of glutamine to ammonia, which is used by the large (or ammonia) chain to synthesize carbamoyl phosphate. Tetramer of heterodimers (alpha,beta)4.</text>
</comment>
<comment type="domain">
    <text evidence="1">The large subunit is composed of 2 ATP-grasp domains that are involved in binding the 2 ATP molecules needed for carbamoyl phosphate synthesis. The N-terminal ATP-grasp domain (referred to as the carboxyphosphate synthetic component) catalyzes the ATP-dependent phosphorylation of hydrogencarbonate to carboxyphosphate and the subsequent nucleophilic attack by ammonia to form a carbamate intermediate. The C-terminal ATP-grasp domain (referred to as the carbamoyl phosphate synthetic component) then catalyzes the phosphorylation of carbamate with the second ATP to form the end product carbamoyl phosphate. The reactive and unstable enzyme intermediates are sequentially channeled from one active site to the next through the interior of the protein over a distance of at least 96 A.</text>
</comment>
<comment type="similarity">
    <text evidence="1">Belongs to the CarB family.</text>
</comment>
<keyword id="KW-0028">Amino-acid biosynthesis</keyword>
<keyword id="KW-0055">Arginine biosynthesis</keyword>
<keyword id="KW-0067">ATP-binding</keyword>
<keyword id="KW-0436">Ligase</keyword>
<keyword id="KW-0460">Magnesium</keyword>
<keyword id="KW-0464">Manganese</keyword>
<keyword id="KW-0479">Metal-binding</keyword>
<keyword id="KW-0547">Nucleotide-binding</keyword>
<keyword id="KW-0665">Pyrimidine biosynthesis</keyword>
<keyword id="KW-0677">Repeat</keyword>
<name>CARB_CLOPS</name>
<proteinExistence type="inferred from homology"/>
<gene>
    <name evidence="1" type="primary">carB</name>
    <name type="ordered locus">CPR_2576</name>
</gene>
<protein>
    <recommendedName>
        <fullName evidence="1">Carbamoyl phosphate synthase large chain</fullName>
        <ecNumber evidence="1">6.3.4.16</ecNumber>
        <ecNumber evidence="1">6.3.5.5</ecNumber>
    </recommendedName>
    <alternativeName>
        <fullName evidence="1">Carbamoyl phosphate synthetase ammonia chain</fullName>
    </alternativeName>
</protein>
<organism>
    <name type="scientific">Clostridium perfringens (strain SM101 / Type A)</name>
    <dbReference type="NCBI Taxonomy" id="289380"/>
    <lineage>
        <taxon>Bacteria</taxon>
        <taxon>Bacillati</taxon>
        <taxon>Bacillota</taxon>
        <taxon>Clostridia</taxon>
        <taxon>Eubacteriales</taxon>
        <taxon>Clostridiaceae</taxon>
        <taxon>Clostridium</taxon>
    </lineage>
</organism>
<feature type="chain" id="PRO_1000066347" description="Carbamoyl phosphate synthase large chain">
    <location>
        <begin position="1"/>
        <end position="1067"/>
    </location>
</feature>
<feature type="domain" description="ATP-grasp 1" evidence="1">
    <location>
        <begin position="133"/>
        <end position="327"/>
    </location>
</feature>
<feature type="domain" description="ATP-grasp 2" evidence="1">
    <location>
        <begin position="674"/>
        <end position="864"/>
    </location>
</feature>
<feature type="domain" description="MGS-like" evidence="1">
    <location>
        <begin position="933"/>
        <end position="1067"/>
    </location>
</feature>
<feature type="region of interest" description="Carboxyphosphate synthetic domain" evidence="1">
    <location>
        <begin position="1"/>
        <end position="401"/>
    </location>
</feature>
<feature type="region of interest" description="Oligomerization domain" evidence="1">
    <location>
        <begin position="402"/>
        <end position="549"/>
    </location>
</feature>
<feature type="region of interest" description="Carbamoyl phosphate synthetic domain" evidence="1">
    <location>
        <begin position="550"/>
        <end position="932"/>
    </location>
</feature>
<feature type="region of interest" description="Allosteric domain" evidence="1">
    <location>
        <begin position="933"/>
        <end position="1067"/>
    </location>
</feature>
<feature type="binding site" evidence="1">
    <location>
        <position position="129"/>
    </location>
    <ligand>
        <name>ATP</name>
        <dbReference type="ChEBI" id="CHEBI:30616"/>
        <label>1</label>
    </ligand>
</feature>
<feature type="binding site" evidence="1">
    <location>
        <position position="169"/>
    </location>
    <ligand>
        <name>ATP</name>
        <dbReference type="ChEBI" id="CHEBI:30616"/>
        <label>1</label>
    </ligand>
</feature>
<feature type="binding site" evidence="1">
    <location>
        <position position="175"/>
    </location>
    <ligand>
        <name>ATP</name>
        <dbReference type="ChEBI" id="CHEBI:30616"/>
        <label>1</label>
    </ligand>
</feature>
<feature type="binding site" evidence="1">
    <location>
        <position position="176"/>
    </location>
    <ligand>
        <name>ATP</name>
        <dbReference type="ChEBI" id="CHEBI:30616"/>
        <label>1</label>
    </ligand>
</feature>
<feature type="binding site" evidence="1">
    <location>
        <position position="208"/>
    </location>
    <ligand>
        <name>ATP</name>
        <dbReference type="ChEBI" id="CHEBI:30616"/>
        <label>1</label>
    </ligand>
</feature>
<feature type="binding site" evidence="1">
    <location>
        <position position="210"/>
    </location>
    <ligand>
        <name>ATP</name>
        <dbReference type="ChEBI" id="CHEBI:30616"/>
        <label>1</label>
    </ligand>
</feature>
<feature type="binding site" evidence="1">
    <location>
        <position position="215"/>
    </location>
    <ligand>
        <name>ATP</name>
        <dbReference type="ChEBI" id="CHEBI:30616"/>
        <label>1</label>
    </ligand>
</feature>
<feature type="binding site" evidence="1">
    <location>
        <position position="241"/>
    </location>
    <ligand>
        <name>ATP</name>
        <dbReference type="ChEBI" id="CHEBI:30616"/>
        <label>1</label>
    </ligand>
</feature>
<feature type="binding site" evidence="1">
    <location>
        <position position="242"/>
    </location>
    <ligand>
        <name>ATP</name>
        <dbReference type="ChEBI" id="CHEBI:30616"/>
        <label>1</label>
    </ligand>
</feature>
<feature type="binding site" evidence="1">
    <location>
        <position position="243"/>
    </location>
    <ligand>
        <name>ATP</name>
        <dbReference type="ChEBI" id="CHEBI:30616"/>
        <label>1</label>
    </ligand>
</feature>
<feature type="binding site" evidence="1">
    <location>
        <position position="284"/>
    </location>
    <ligand>
        <name>ATP</name>
        <dbReference type="ChEBI" id="CHEBI:30616"/>
        <label>1</label>
    </ligand>
</feature>
<feature type="binding site" evidence="1">
    <location>
        <position position="284"/>
    </location>
    <ligand>
        <name>Mg(2+)</name>
        <dbReference type="ChEBI" id="CHEBI:18420"/>
        <label>1</label>
    </ligand>
</feature>
<feature type="binding site" evidence="1">
    <location>
        <position position="284"/>
    </location>
    <ligand>
        <name>Mn(2+)</name>
        <dbReference type="ChEBI" id="CHEBI:29035"/>
        <label>1</label>
    </ligand>
</feature>
<feature type="binding site" evidence="1">
    <location>
        <position position="298"/>
    </location>
    <ligand>
        <name>ATP</name>
        <dbReference type="ChEBI" id="CHEBI:30616"/>
        <label>1</label>
    </ligand>
</feature>
<feature type="binding site" evidence="1">
    <location>
        <position position="298"/>
    </location>
    <ligand>
        <name>Mg(2+)</name>
        <dbReference type="ChEBI" id="CHEBI:18420"/>
        <label>1</label>
    </ligand>
</feature>
<feature type="binding site" evidence="1">
    <location>
        <position position="298"/>
    </location>
    <ligand>
        <name>Mg(2+)</name>
        <dbReference type="ChEBI" id="CHEBI:18420"/>
        <label>2</label>
    </ligand>
</feature>
<feature type="binding site" evidence="1">
    <location>
        <position position="298"/>
    </location>
    <ligand>
        <name>Mn(2+)</name>
        <dbReference type="ChEBI" id="CHEBI:29035"/>
        <label>1</label>
    </ligand>
</feature>
<feature type="binding site" evidence="1">
    <location>
        <position position="298"/>
    </location>
    <ligand>
        <name>Mn(2+)</name>
        <dbReference type="ChEBI" id="CHEBI:29035"/>
        <label>2</label>
    </ligand>
</feature>
<feature type="binding site" evidence="1">
    <location>
        <position position="300"/>
    </location>
    <ligand>
        <name>Mg(2+)</name>
        <dbReference type="ChEBI" id="CHEBI:18420"/>
        <label>2</label>
    </ligand>
</feature>
<feature type="binding site" evidence="1">
    <location>
        <position position="300"/>
    </location>
    <ligand>
        <name>Mn(2+)</name>
        <dbReference type="ChEBI" id="CHEBI:29035"/>
        <label>2</label>
    </ligand>
</feature>
<feature type="binding site" evidence="1">
    <location>
        <position position="710"/>
    </location>
    <ligand>
        <name>ATP</name>
        <dbReference type="ChEBI" id="CHEBI:30616"/>
        <label>2</label>
    </ligand>
</feature>
<feature type="binding site" evidence="1">
    <location>
        <position position="749"/>
    </location>
    <ligand>
        <name>ATP</name>
        <dbReference type="ChEBI" id="CHEBI:30616"/>
        <label>2</label>
    </ligand>
</feature>
<feature type="binding site" evidence="1">
    <location>
        <position position="751"/>
    </location>
    <ligand>
        <name>ATP</name>
        <dbReference type="ChEBI" id="CHEBI:30616"/>
        <label>2</label>
    </ligand>
</feature>
<feature type="binding site" evidence="1">
    <location>
        <position position="755"/>
    </location>
    <ligand>
        <name>ATP</name>
        <dbReference type="ChEBI" id="CHEBI:30616"/>
        <label>2</label>
    </ligand>
</feature>
<feature type="binding site" evidence="1">
    <location>
        <position position="780"/>
    </location>
    <ligand>
        <name>ATP</name>
        <dbReference type="ChEBI" id="CHEBI:30616"/>
        <label>2</label>
    </ligand>
</feature>
<feature type="binding site" evidence="1">
    <location>
        <position position="781"/>
    </location>
    <ligand>
        <name>ATP</name>
        <dbReference type="ChEBI" id="CHEBI:30616"/>
        <label>2</label>
    </ligand>
</feature>
<feature type="binding site" evidence="1">
    <location>
        <position position="782"/>
    </location>
    <ligand>
        <name>ATP</name>
        <dbReference type="ChEBI" id="CHEBI:30616"/>
        <label>2</label>
    </ligand>
</feature>
<feature type="binding site" evidence="1">
    <location>
        <position position="783"/>
    </location>
    <ligand>
        <name>ATP</name>
        <dbReference type="ChEBI" id="CHEBI:30616"/>
        <label>2</label>
    </ligand>
</feature>
<feature type="binding site" evidence="1">
    <location>
        <position position="823"/>
    </location>
    <ligand>
        <name>ATP</name>
        <dbReference type="ChEBI" id="CHEBI:30616"/>
        <label>2</label>
    </ligand>
</feature>
<feature type="binding site" evidence="1">
    <location>
        <position position="823"/>
    </location>
    <ligand>
        <name>Mg(2+)</name>
        <dbReference type="ChEBI" id="CHEBI:18420"/>
        <label>3</label>
    </ligand>
</feature>
<feature type="binding site" evidence="1">
    <location>
        <position position="823"/>
    </location>
    <ligand>
        <name>Mn(2+)</name>
        <dbReference type="ChEBI" id="CHEBI:29035"/>
        <label>3</label>
    </ligand>
</feature>
<feature type="binding site" evidence="1">
    <location>
        <position position="835"/>
    </location>
    <ligand>
        <name>ATP</name>
        <dbReference type="ChEBI" id="CHEBI:30616"/>
        <label>2</label>
    </ligand>
</feature>
<feature type="binding site" evidence="1">
    <location>
        <position position="835"/>
    </location>
    <ligand>
        <name>Mg(2+)</name>
        <dbReference type="ChEBI" id="CHEBI:18420"/>
        <label>3</label>
    </ligand>
</feature>
<feature type="binding site" evidence="1">
    <location>
        <position position="835"/>
    </location>
    <ligand>
        <name>Mg(2+)</name>
        <dbReference type="ChEBI" id="CHEBI:18420"/>
        <label>4</label>
    </ligand>
</feature>
<feature type="binding site" evidence="1">
    <location>
        <position position="835"/>
    </location>
    <ligand>
        <name>Mn(2+)</name>
        <dbReference type="ChEBI" id="CHEBI:29035"/>
        <label>3</label>
    </ligand>
</feature>
<feature type="binding site" evidence="1">
    <location>
        <position position="835"/>
    </location>
    <ligand>
        <name>Mn(2+)</name>
        <dbReference type="ChEBI" id="CHEBI:29035"/>
        <label>4</label>
    </ligand>
</feature>
<feature type="binding site" evidence="1">
    <location>
        <position position="837"/>
    </location>
    <ligand>
        <name>Mg(2+)</name>
        <dbReference type="ChEBI" id="CHEBI:18420"/>
        <label>4</label>
    </ligand>
</feature>
<feature type="binding site" evidence="1">
    <location>
        <position position="837"/>
    </location>
    <ligand>
        <name>Mn(2+)</name>
        <dbReference type="ChEBI" id="CHEBI:29035"/>
        <label>4</label>
    </ligand>
</feature>
<accession>Q0SPY4</accession>